<dbReference type="EC" id="2.7.2.3" evidence="1"/>
<dbReference type="EMBL" id="CP000444">
    <property type="protein sequence ID" value="ABI44231.1"/>
    <property type="molecule type" value="Genomic_DNA"/>
</dbReference>
<dbReference type="SMR" id="Q0HRM4"/>
<dbReference type="KEGG" id="shm:Shewmr7_3248"/>
<dbReference type="HOGENOM" id="CLU_025427_0_2_6"/>
<dbReference type="UniPathway" id="UPA00109">
    <property type="reaction ID" value="UER00185"/>
</dbReference>
<dbReference type="GO" id="GO:0005829">
    <property type="term" value="C:cytosol"/>
    <property type="evidence" value="ECO:0007669"/>
    <property type="project" value="TreeGrafter"/>
</dbReference>
<dbReference type="GO" id="GO:0043531">
    <property type="term" value="F:ADP binding"/>
    <property type="evidence" value="ECO:0007669"/>
    <property type="project" value="TreeGrafter"/>
</dbReference>
<dbReference type="GO" id="GO:0005524">
    <property type="term" value="F:ATP binding"/>
    <property type="evidence" value="ECO:0007669"/>
    <property type="project" value="UniProtKB-KW"/>
</dbReference>
<dbReference type="GO" id="GO:0004618">
    <property type="term" value="F:phosphoglycerate kinase activity"/>
    <property type="evidence" value="ECO:0007669"/>
    <property type="project" value="UniProtKB-UniRule"/>
</dbReference>
<dbReference type="GO" id="GO:0006094">
    <property type="term" value="P:gluconeogenesis"/>
    <property type="evidence" value="ECO:0007669"/>
    <property type="project" value="TreeGrafter"/>
</dbReference>
<dbReference type="GO" id="GO:0006096">
    <property type="term" value="P:glycolytic process"/>
    <property type="evidence" value="ECO:0007669"/>
    <property type="project" value="UniProtKB-UniRule"/>
</dbReference>
<dbReference type="FunFam" id="3.40.50.1260:FF:000001">
    <property type="entry name" value="Phosphoglycerate kinase"/>
    <property type="match status" value="1"/>
</dbReference>
<dbReference type="FunFam" id="3.40.50.1260:FF:000002">
    <property type="entry name" value="Phosphoglycerate kinase"/>
    <property type="match status" value="1"/>
</dbReference>
<dbReference type="Gene3D" id="3.40.50.1260">
    <property type="entry name" value="Phosphoglycerate kinase, N-terminal domain"/>
    <property type="match status" value="2"/>
</dbReference>
<dbReference type="HAMAP" id="MF_00145">
    <property type="entry name" value="Phosphoglyc_kinase"/>
    <property type="match status" value="1"/>
</dbReference>
<dbReference type="InterPro" id="IPR001576">
    <property type="entry name" value="Phosphoglycerate_kinase"/>
</dbReference>
<dbReference type="InterPro" id="IPR015911">
    <property type="entry name" value="Phosphoglycerate_kinase_CS"/>
</dbReference>
<dbReference type="InterPro" id="IPR015824">
    <property type="entry name" value="Phosphoglycerate_kinase_N"/>
</dbReference>
<dbReference type="InterPro" id="IPR036043">
    <property type="entry name" value="Phosphoglycerate_kinase_sf"/>
</dbReference>
<dbReference type="PANTHER" id="PTHR11406">
    <property type="entry name" value="PHOSPHOGLYCERATE KINASE"/>
    <property type="match status" value="1"/>
</dbReference>
<dbReference type="PANTHER" id="PTHR11406:SF23">
    <property type="entry name" value="PHOSPHOGLYCERATE KINASE 1, CHLOROPLASTIC-RELATED"/>
    <property type="match status" value="1"/>
</dbReference>
<dbReference type="Pfam" id="PF00162">
    <property type="entry name" value="PGK"/>
    <property type="match status" value="1"/>
</dbReference>
<dbReference type="PIRSF" id="PIRSF000724">
    <property type="entry name" value="Pgk"/>
    <property type="match status" value="1"/>
</dbReference>
<dbReference type="PRINTS" id="PR00477">
    <property type="entry name" value="PHGLYCKINASE"/>
</dbReference>
<dbReference type="SUPFAM" id="SSF53748">
    <property type="entry name" value="Phosphoglycerate kinase"/>
    <property type="match status" value="1"/>
</dbReference>
<dbReference type="PROSITE" id="PS00111">
    <property type="entry name" value="PGLYCERATE_KINASE"/>
    <property type="match status" value="1"/>
</dbReference>
<proteinExistence type="inferred from homology"/>
<feature type="chain" id="PRO_1000058062" description="Phosphoglycerate kinase">
    <location>
        <begin position="1"/>
        <end position="391"/>
    </location>
</feature>
<feature type="binding site" evidence="1">
    <location>
        <begin position="21"/>
        <end position="23"/>
    </location>
    <ligand>
        <name>substrate</name>
    </ligand>
</feature>
<feature type="binding site" evidence="1">
    <location>
        <position position="36"/>
    </location>
    <ligand>
        <name>substrate</name>
    </ligand>
</feature>
<feature type="binding site" evidence="1">
    <location>
        <begin position="59"/>
        <end position="62"/>
    </location>
    <ligand>
        <name>substrate</name>
    </ligand>
</feature>
<feature type="binding site" evidence="1">
    <location>
        <position position="113"/>
    </location>
    <ligand>
        <name>substrate</name>
    </ligand>
</feature>
<feature type="binding site" evidence="1">
    <location>
        <position position="146"/>
    </location>
    <ligand>
        <name>substrate</name>
    </ligand>
</feature>
<feature type="binding site" evidence="1">
    <location>
        <position position="197"/>
    </location>
    <ligand>
        <name>ATP</name>
        <dbReference type="ChEBI" id="CHEBI:30616"/>
    </ligand>
</feature>
<feature type="binding site" evidence="1">
    <location>
        <position position="319"/>
    </location>
    <ligand>
        <name>ATP</name>
        <dbReference type="ChEBI" id="CHEBI:30616"/>
    </ligand>
</feature>
<feature type="binding site" evidence="1">
    <location>
        <begin position="345"/>
        <end position="348"/>
    </location>
    <ligand>
        <name>ATP</name>
        <dbReference type="ChEBI" id="CHEBI:30616"/>
    </ligand>
</feature>
<sequence length="391" mass="40680">MAIINMSDLDLQGKRVLIREDLNVPVSNGVVTSDARLRASLPTIELALAKGAAVMVMSHLGRPTEGEYNSEFSMQPVVDYLAKALSCTVRLATDYLDGVEVAVGEVVVFENVRFNKGEKKNDEALSKKMAALCDVYVMDAFGTAHRAEASTNGVGLHAPIACAGPLLAQELEALGKALDNPARPLVAIVGGSKVSTKLTVLESLSGIVDQLVVGGGIANTFIAAAGHNVGKSLYEADLIDEAKRLVANAQSRGGDIPVPTDVVVAGEFSPTAAATLKAVNEVGDSDMIFDIGPDSAEALAKIIESAGTIVWNGPVGVFEFDQFGEGTKRIAQAIADSKAFSIAGGGDTLAAVDKYDIADKVSYISTGGGAFLEFLEGKELPAVAMLKQRGA</sequence>
<organism>
    <name type="scientific">Shewanella sp. (strain MR-7)</name>
    <dbReference type="NCBI Taxonomy" id="60481"/>
    <lineage>
        <taxon>Bacteria</taxon>
        <taxon>Pseudomonadati</taxon>
        <taxon>Pseudomonadota</taxon>
        <taxon>Gammaproteobacteria</taxon>
        <taxon>Alteromonadales</taxon>
        <taxon>Shewanellaceae</taxon>
        <taxon>Shewanella</taxon>
    </lineage>
</organism>
<evidence type="ECO:0000255" key="1">
    <source>
        <dbReference type="HAMAP-Rule" id="MF_00145"/>
    </source>
</evidence>
<accession>Q0HRM4</accession>
<keyword id="KW-0067">ATP-binding</keyword>
<keyword id="KW-0963">Cytoplasm</keyword>
<keyword id="KW-0324">Glycolysis</keyword>
<keyword id="KW-0418">Kinase</keyword>
<keyword id="KW-0547">Nucleotide-binding</keyword>
<keyword id="KW-0808">Transferase</keyword>
<reference key="1">
    <citation type="submission" date="2006-08" db="EMBL/GenBank/DDBJ databases">
        <title>Complete sequence of chromosome 1 of Shewanella sp. MR-7.</title>
        <authorList>
            <person name="Copeland A."/>
            <person name="Lucas S."/>
            <person name="Lapidus A."/>
            <person name="Barry K."/>
            <person name="Detter J.C."/>
            <person name="Glavina del Rio T."/>
            <person name="Hammon N."/>
            <person name="Israni S."/>
            <person name="Dalin E."/>
            <person name="Tice H."/>
            <person name="Pitluck S."/>
            <person name="Kiss H."/>
            <person name="Brettin T."/>
            <person name="Bruce D."/>
            <person name="Han C."/>
            <person name="Tapia R."/>
            <person name="Gilna P."/>
            <person name="Schmutz J."/>
            <person name="Larimer F."/>
            <person name="Land M."/>
            <person name="Hauser L."/>
            <person name="Kyrpides N."/>
            <person name="Mikhailova N."/>
            <person name="Nealson K."/>
            <person name="Konstantinidis K."/>
            <person name="Klappenbach J."/>
            <person name="Tiedje J."/>
            <person name="Richardson P."/>
        </authorList>
    </citation>
    <scope>NUCLEOTIDE SEQUENCE [LARGE SCALE GENOMIC DNA]</scope>
    <source>
        <strain>MR-7</strain>
    </source>
</reference>
<comment type="catalytic activity">
    <reaction evidence="1">
        <text>(2R)-3-phosphoglycerate + ATP = (2R)-3-phospho-glyceroyl phosphate + ADP</text>
        <dbReference type="Rhea" id="RHEA:14801"/>
        <dbReference type="ChEBI" id="CHEBI:30616"/>
        <dbReference type="ChEBI" id="CHEBI:57604"/>
        <dbReference type="ChEBI" id="CHEBI:58272"/>
        <dbReference type="ChEBI" id="CHEBI:456216"/>
        <dbReference type="EC" id="2.7.2.3"/>
    </reaction>
</comment>
<comment type="pathway">
    <text evidence="1">Carbohydrate degradation; glycolysis; pyruvate from D-glyceraldehyde 3-phosphate: step 2/5.</text>
</comment>
<comment type="subunit">
    <text evidence="1">Monomer.</text>
</comment>
<comment type="subcellular location">
    <subcellularLocation>
        <location evidence="1">Cytoplasm</location>
    </subcellularLocation>
</comment>
<comment type="similarity">
    <text evidence="1">Belongs to the phosphoglycerate kinase family.</text>
</comment>
<name>PGK_SHESR</name>
<gene>
    <name evidence="1" type="primary">pgk</name>
    <name type="ordered locus">Shewmr7_3248</name>
</gene>
<protein>
    <recommendedName>
        <fullName evidence="1">Phosphoglycerate kinase</fullName>
        <ecNumber evidence="1">2.7.2.3</ecNumber>
    </recommendedName>
</protein>